<reference key="1">
    <citation type="journal article" date="2006" name="J. Bacteriol.">
        <title>Pathogenomic sequence analysis of Bacillus cereus and Bacillus thuringiensis isolates closely related to Bacillus anthracis.</title>
        <authorList>
            <person name="Han C.S."/>
            <person name="Xie G."/>
            <person name="Challacombe J.F."/>
            <person name="Altherr M.R."/>
            <person name="Bhotika S.S."/>
            <person name="Bruce D."/>
            <person name="Campbell C.S."/>
            <person name="Campbell M.L."/>
            <person name="Chen J."/>
            <person name="Chertkov O."/>
            <person name="Cleland C."/>
            <person name="Dimitrijevic M."/>
            <person name="Doggett N.A."/>
            <person name="Fawcett J.J."/>
            <person name="Glavina T."/>
            <person name="Goodwin L.A."/>
            <person name="Hill K.K."/>
            <person name="Hitchcock P."/>
            <person name="Jackson P.J."/>
            <person name="Keim P."/>
            <person name="Kewalramani A.R."/>
            <person name="Longmire J."/>
            <person name="Lucas S."/>
            <person name="Malfatti S."/>
            <person name="McMurry K."/>
            <person name="Meincke L.J."/>
            <person name="Misra M."/>
            <person name="Moseman B.L."/>
            <person name="Mundt M."/>
            <person name="Munk A.C."/>
            <person name="Okinaka R.T."/>
            <person name="Parson-Quintana B."/>
            <person name="Reilly L.P."/>
            <person name="Richardson P."/>
            <person name="Robinson D.L."/>
            <person name="Rubin E."/>
            <person name="Saunders E."/>
            <person name="Tapia R."/>
            <person name="Tesmer J.G."/>
            <person name="Thayer N."/>
            <person name="Thompson L.S."/>
            <person name="Tice H."/>
            <person name="Ticknor L.O."/>
            <person name="Wills P.L."/>
            <person name="Brettin T.S."/>
            <person name="Gilna P."/>
        </authorList>
    </citation>
    <scope>NUCLEOTIDE SEQUENCE [LARGE SCALE GENOMIC DNA]</scope>
    <source>
        <strain>97-27</strain>
    </source>
</reference>
<organism>
    <name type="scientific">Bacillus thuringiensis subsp. konkukian (strain 97-27)</name>
    <dbReference type="NCBI Taxonomy" id="281309"/>
    <lineage>
        <taxon>Bacteria</taxon>
        <taxon>Bacillati</taxon>
        <taxon>Bacillota</taxon>
        <taxon>Bacilli</taxon>
        <taxon>Bacillales</taxon>
        <taxon>Bacillaceae</taxon>
        <taxon>Bacillus</taxon>
        <taxon>Bacillus cereus group</taxon>
    </lineage>
</organism>
<evidence type="ECO:0000255" key="1">
    <source>
        <dbReference type="HAMAP-Rule" id="MF_00014"/>
    </source>
</evidence>
<protein>
    <recommendedName>
        <fullName evidence="1">Ribosome maturation factor RimM</fullName>
    </recommendedName>
</protein>
<name>RIMM_BACHK</name>
<proteinExistence type="inferred from homology"/>
<accession>Q6HEX3</accession>
<comment type="function">
    <text evidence="1">An accessory protein needed during the final step in the assembly of 30S ribosomal subunit, possibly for assembly of the head region. Essential for efficient processing of 16S rRNA. May be needed both before and after RbfA during the maturation of 16S rRNA. It has affinity for free ribosomal 30S subunits but not for 70S ribosomes.</text>
</comment>
<comment type="subunit">
    <text evidence="1">Binds ribosomal protein uS19.</text>
</comment>
<comment type="subcellular location">
    <subcellularLocation>
        <location evidence="1">Cytoplasm</location>
    </subcellularLocation>
</comment>
<comment type="domain">
    <text evidence="1">The PRC barrel domain binds ribosomal protein uS19.</text>
</comment>
<comment type="similarity">
    <text evidence="1">Belongs to the RimM family.</text>
</comment>
<gene>
    <name evidence="1" type="primary">rimM</name>
    <name type="ordered locus">BT9727_3583</name>
</gene>
<feature type="chain" id="PRO_0000163250" description="Ribosome maturation factor RimM">
    <location>
        <begin position="1"/>
        <end position="171"/>
    </location>
</feature>
<feature type="domain" description="PRC barrel" evidence="1">
    <location>
        <begin position="97"/>
        <end position="170"/>
    </location>
</feature>
<dbReference type="EMBL" id="AE017355">
    <property type="protein sequence ID" value="AAT63830.1"/>
    <property type="molecule type" value="Genomic_DNA"/>
</dbReference>
<dbReference type="RefSeq" id="WP_000170268.1">
    <property type="nucleotide sequence ID" value="NC_005957.1"/>
</dbReference>
<dbReference type="RefSeq" id="YP_037903.1">
    <property type="nucleotide sequence ID" value="NC_005957.1"/>
</dbReference>
<dbReference type="SMR" id="Q6HEX3"/>
<dbReference type="GeneID" id="93007270"/>
<dbReference type="KEGG" id="btk:BT9727_3583"/>
<dbReference type="PATRIC" id="fig|281309.8.peg.3821"/>
<dbReference type="HOGENOM" id="CLU_077636_3_1_9"/>
<dbReference type="Proteomes" id="UP000001301">
    <property type="component" value="Chromosome"/>
</dbReference>
<dbReference type="GO" id="GO:0005737">
    <property type="term" value="C:cytoplasm"/>
    <property type="evidence" value="ECO:0007669"/>
    <property type="project" value="UniProtKB-SubCell"/>
</dbReference>
<dbReference type="GO" id="GO:0005840">
    <property type="term" value="C:ribosome"/>
    <property type="evidence" value="ECO:0007669"/>
    <property type="project" value="InterPro"/>
</dbReference>
<dbReference type="GO" id="GO:0043022">
    <property type="term" value="F:ribosome binding"/>
    <property type="evidence" value="ECO:0007669"/>
    <property type="project" value="InterPro"/>
</dbReference>
<dbReference type="GO" id="GO:0042274">
    <property type="term" value="P:ribosomal small subunit biogenesis"/>
    <property type="evidence" value="ECO:0007669"/>
    <property type="project" value="UniProtKB-UniRule"/>
</dbReference>
<dbReference type="GO" id="GO:0006364">
    <property type="term" value="P:rRNA processing"/>
    <property type="evidence" value="ECO:0007669"/>
    <property type="project" value="UniProtKB-UniRule"/>
</dbReference>
<dbReference type="Gene3D" id="2.30.30.240">
    <property type="entry name" value="PRC-barrel domain"/>
    <property type="match status" value="1"/>
</dbReference>
<dbReference type="Gene3D" id="2.40.30.60">
    <property type="entry name" value="RimM"/>
    <property type="match status" value="1"/>
</dbReference>
<dbReference type="HAMAP" id="MF_00014">
    <property type="entry name" value="Ribosome_mat_RimM"/>
    <property type="match status" value="1"/>
</dbReference>
<dbReference type="InterPro" id="IPR027275">
    <property type="entry name" value="PRC-brl_dom"/>
</dbReference>
<dbReference type="InterPro" id="IPR011033">
    <property type="entry name" value="PRC_barrel-like_sf"/>
</dbReference>
<dbReference type="InterPro" id="IPR011961">
    <property type="entry name" value="RimM"/>
</dbReference>
<dbReference type="InterPro" id="IPR002676">
    <property type="entry name" value="RimM_N"/>
</dbReference>
<dbReference type="InterPro" id="IPR036976">
    <property type="entry name" value="RimM_N_sf"/>
</dbReference>
<dbReference type="InterPro" id="IPR009000">
    <property type="entry name" value="Transl_B-barrel_sf"/>
</dbReference>
<dbReference type="NCBIfam" id="TIGR02273">
    <property type="entry name" value="16S_RimM"/>
    <property type="match status" value="1"/>
</dbReference>
<dbReference type="PANTHER" id="PTHR33692">
    <property type="entry name" value="RIBOSOME MATURATION FACTOR RIMM"/>
    <property type="match status" value="1"/>
</dbReference>
<dbReference type="PANTHER" id="PTHR33692:SF1">
    <property type="entry name" value="RIBOSOME MATURATION FACTOR RIMM"/>
    <property type="match status" value="1"/>
</dbReference>
<dbReference type="Pfam" id="PF05239">
    <property type="entry name" value="PRC"/>
    <property type="match status" value="1"/>
</dbReference>
<dbReference type="Pfam" id="PF01782">
    <property type="entry name" value="RimM"/>
    <property type="match status" value="1"/>
</dbReference>
<dbReference type="SUPFAM" id="SSF50346">
    <property type="entry name" value="PRC-barrel domain"/>
    <property type="match status" value="1"/>
</dbReference>
<dbReference type="SUPFAM" id="SSF50447">
    <property type="entry name" value="Translation proteins"/>
    <property type="match status" value="1"/>
</dbReference>
<sequence length="171" mass="19302">MTKWFNVGKIVNTHGVKGEIRVVSRTDFPEERYKVGNTLYISNEKGGEPFPVKITSHRQHKTFDLLTFEGYGNVNEVEQFKGSLLKVPEDQLGELAEGEYYYHEIIGCNVVTEEGEALGTIKEVLSPGANDVWVIKRPKGQDLLIPYIDDVVLQVNIENKLVTIHVMEGLL</sequence>
<keyword id="KW-0143">Chaperone</keyword>
<keyword id="KW-0963">Cytoplasm</keyword>
<keyword id="KW-0690">Ribosome biogenesis</keyword>
<keyword id="KW-0698">rRNA processing</keyword>